<accession>O28244</accession>
<keyword id="KW-0030">Aminoacyl-tRNA synthetase</keyword>
<keyword id="KW-0067">ATP-binding</keyword>
<keyword id="KW-0963">Cytoplasm</keyword>
<keyword id="KW-0436">Ligase</keyword>
<keyword id="KW-0547">Nucleotide-binding</keyword>
<keyword id="KW-0648">Protein biosynthesis</keyword>
<keyword id="KW-1185">Reference proteome</keyword>
<gene>
    <name evidence="1" type="primary">serS</name>
    <name type="ordered locus">AF_2035</name>
</gene>
<proteinExistence type="inferred from homology"/>
<organism>
    <name type="scientific">Archaeoglobus fulgidus (strain ATCC 49558 / DSM 4304 / JCM 9628 / NBRC 100126 / VC-16)</name>
    <dbReference type="NCBI Taxonomy" id="224325"/>
    <lineage>
        <taxon>Archaea</taxon>
        <taxon>Methanobacteriati</taxon>
        <taxon>Methanobacteriota</taxon>
        <taxon>Archaeoglobi</taxon>
        <taxon>Archaeoglobales</taxon>
        <taxon>Archaeoglobaceae</taxon>
        <taxon>Archaeoglobus</taxon>
    </lineage>
</organism>
<reference key="1">
    <citation type="journal article" date="1997" name="Nature">
        <title>The complete genome sequence of the hyperthermophilic, sulphate-reducing archaeon Archaeoglobus fulgidus.</title>
        <authorList>
            <person name="Klenk H.-P."/>
            <person name="Clayton R.A."/>
            <person name="Tomb J.-F."/>
            <person name="White O."/>
            <person name="Nelson K.E."/>
            <person name="Ketchum K.A."/>
            <person name="Dodson R.J."/>
            <person name="Gwinn M.L."/>
            <person name="Hickey E.K."/>
            <person name="Peterson J.D."/>
            <person name="Richardson D.L."/>
            <person name="Kerlavage A.R."/>
            <person name="Graham D.E."/>
            <person name="Kyrpides N.C."/>
            <person name="Fleischmann R.D."/>
            <person name="Quackenbush J."/>
            <person name="Lee N.H."/>
            <person name="Sutton G.G."/>
            <person name="Gill S.R."/>
            <person name="Kirkness E.F."/>
            <person name="Dougherty B.A."/>
            <person name="McKenney K."/>
            <person name="Adams M.D."/>
            <person name="Loftus B.J."/>
            <person name="Peterson S.N."/>
            <person name="Reich C.I."/>
            <person name="McNeil L.K."/>
            <person name="Badger J.H."/>
            <person name="Glodek A."/>
            <person name="Zhou L."/>
            <person name="Overbeek R."/>
            <person name="Gocayne J.D."/>
            <person name="Weidman J.F."/>
            <person name="McDonald L.A."/>
            <person name="Utterback T.R."/>
            <person name="Cotton M.D."/>
            <person name="Spriggs T."/>
            <person name="Artiach P."/>
            <person name="Kaine B.P."/>
            <person name="Sykes S.M."/>
            <person name="Sadow P.W."/>
            <person name="D'Andrea K.P."/>
            <person name="Bowman C."/>
            <person name="Fujii C."/>
            <person name="Garland S.A."/>
            <person name="Mason T.M."/>
            <person name="Olsen G.J."/>
            <person name="Fraser C.M."/>
            <person name="Smith H.O."/>
            <person name="Woese C.R."/>
            <person name="Venter J.C."/>
        </authorList>
    </citation>
    <scope>NUCLEOTIDE SEQUENCE [LARGE SCALE GENOMIC DNA]</scope>
    <source>
        <strain>ATCC 49558 / DSM 4304 / JCM 9628 / NBRC 100126 / VC-16</strain>
    </source>
</reference>
<protein>
    <recommendedName>
        <fullName evidence="1">Serine--tRNA ligase</fullName>
        <ecNumber evidence="1">6.1.1.11</ecNumber>
    </recommendedName>
    <alternativeName>
        <fullName evidence="1">Seryl-tRNA synthetase</fullName>
        <shortName evidence="1">SerRS</shortName>
    </alternativeName>
    <alternativeName>
        <fullName evidence="1">Seryl-tRNA(Ser/Sec) synthetase</fullName>
    </alternativeName>
</protein>
<comment type="function">
    <text evidence="1">Catalyzes the attachment of serine to tRNA(Ser). Is also able to aminoacylate tRNA(Sec) with serine, to form the misacylated tRNA L-seryl-tRNA(Sec), which will be further converted into selenocysteinyl-tRNA(Sec).</text>
</comment>
<comment type="catalytic activity">
    <reaction evidence="1">
        <text>tRNA(Ser) + L-serine + ATP = L-seryl-tRNA(Ser) + AMP + diphosphate + H(+)</text>
        <dbReference type="Rhea" id="RHEA:12292"/>
        <dbReference type="Rhea" id="RHEA-COMP:9669"/>
        <dbReference type="Rhea" id="RHEA-COMP:9703"/>
        <dbReference type="ChEBI" id="CHEBI:15378"/>
        <dbReference type="ChEBI" id="CHEBI:30616"/>
        <dbReference type="ChEBI" id="CHEBI:33019"/>
        <dbReference type="ChEBI" id="CHEBI:33384"/>
        <dbReference type="ChEBI" id="CHEBI:78442"/>
        <dbReference type="ChEBI" id="CHEBI:78533"/>
        <dbReference type="ChEBI" id="CHEBI:456215"/>
        <dbReference type="EC" id="6.1.1.11"/>
    </reaction>
</comment>
<comment type="catalytic activity">
    <reaction evidence="1">
        <text>tRNA(Sec) + L-serine + ATP = L-seryl-tRNA(Sec) + AMP + diphosphate + H(+)</text>
        <dbReference type="Rhea" id="RHEA:42580"/>
        <dbReference type="Rhea" id="RHEA-COMP:9742"/>
        <dbReference type="Rhea" id="RHEA-COMP:10128"/>
        <dbReference type="ChEBI" id="CHEBI:15378"/>
        <dbReference type="ChEBI" id="CHEBI:30616"/>
        <dbReference type="ChEBI" id="CHEBI:33019"/>
        <dbReference type="ChEBI" id="CHEBI:33384"/>
        <dbReference type="ChEBI" id="CHEBI:78442"/>
        <dbReference type="ChEBI" id="CHEBI:78533"/>
        <dbReference type="ChEBI" id="CHEBI:456215"/>
        <dbReference type="EC" id="6.1.1.11"/>
    </reaction>
</comment>
<comment type="pathway">
    <text evidence="1">Aminoacyl-tRNA biosynthesis; selenocysteinyl-tRNA(Sec) biosynthesis; L-seryl-tRNA(Sec) from L-serine and tRNA(Sec): step 1/1.</text>
</comment>
<comment type="subunit">
    <text evidence="1">Homodimer. The tRNA molecule binds across the dimer.</text>
</comment>
<comment type="subcellular location">
    <subcellularLocation>
        <location evidence="1">Cytoplasm</location>
    </subcellularLocation>
</comment>
<comment type="domain">
    <text evidence="1">Consists of two distinct domains, a catalytic core and a N-terminal extension that is involved in tRNA binding.</text>
</comment>
<comment type="similarity">
    <text evidence="1">Belongs to the class-II aminoacyl-tRNA synthetase family. Type-1 seryl-tRNA synthetase subfamily.</text>
</comment>
<feature type="chain" id="PRO_0000122170" description="Serine--tRNA ligase">
    <location>
        <begin position="1"/>
        <end position="453"/>
    </location>
</feature>
<feature type="binding site" evidence="1">
    <location>
        <begin position="249"/>
        <end position="251"/>
    </location>
    <ligand>
        <name>L-serine</name>
        <dbReference type="ChEBI" id="CHEBI:33384"/>
    </ligand>
</feature>
<feature type="binding site" evidence="1">
    <location>
        <begin position="280"/>
        <end position="282"/>
    </location>
    <ligand>
        <name>ATP</name>
        <dbReference type="ChEBI" id="CHEBI:30616"/>
    </ligand>
</feature>
<feature type="binding site" evidence="1">
    <location>
        <position position="296"/>
    </location>
    <ligand>
        <name>ATP</name>
        <dbReference type="ChEBI" id="CHEBI:30616"/>
    </ligand>
</feature>
<feature type="binding site" evidence="1">
    <location>
        <position position="303"/>
    </location>
    <ligand>
        <name>L-serine</name>
        <dbReference type="ChEBI" id="CHEBI:33384"/>
    </ligand>
</feature>
<feature type="binding site" evidence="1">
    <location>
        <begin position="367"/>
        <end position="370"/>
    </location>
    <ligand>
        <name>ATP</name>
        <dbReference type="ChEBI" id="CHEBI:30616"/>
    </ligand>
</feature>
<feature type="binding site" evidence="1">
    <location>
        <position position="404"/>
    </location>
    <ligand>
        <name>L-serine</name>
        <dbReference type="ChEBI" id="CHEBI:33384"/>
    </ligand>
</feature>
<name>SYS_ARCFU</name>
<dbReference type="EC" id="6.1.1.11" evidence="1"/>
<dbReference type="EMBL" id="AE000782">
    <property type="protein sequence ID" value="AAB89219.1"/>
    <property type="molecule type" value="Genomic_DNA"/>
</dbReference>
<dbReference type="PIR" id="B69504">
    <property type="entry name" value="B69504"/>
</dbReference>
<dbReference type="SMR" id="O28244"/>
<dbReference type="STRING" id="224325.AF_2035"/>
<dbReference type="PaxDb" id="224325-AF_2035"/>
<dbReference type="EnsemblBacteria" id="AAB89219">
    <property type="protein sequence ID" value="AAB89219"/>
    <property type="gene ID" value="AF_2035"/>
</dbReference>
<dbReference type="KEGG" id="afu:AF_2035"/>
<dbReference type="eggNOG" id="arCOG00403">
    <property type="taxonomic scope" value="Archaea"/>
</dbReference>
<dbReference type="HOGENOM" id="CLU_023797_0_1_2"/>
<dbReference type="OrthoDB" id="35932at2157"/>
<dbReference type="PhylomeDB" id="O28244"/>
<dbReference type="UniPathway" id="UPA00906">
    <property type="reaction ID" value="UER00895"/>
</dbReference>
<dbReference type="Proteomes" id="UP000002199">
    <property type="component" value="Chromosome"/>
</dbReference>
<dbReference type="GO" id="GO:0005737">
    <property type="term" value="C:cytoplasm"/>
    <property type="evidence" value="ECO:0007669"/>
    <property type="project" value="UniProtKB-SubCell"/>
</dbReference>
<dbReference type="GO" id="GO:0005524">
    <property type="term" value="F:ATP binding"/>
    <property type="evidence" value="ECO:0007669"/>
    <property type="project" value="UniProtKB-UniRule"/>
</dbReference>
<dbReference type="GO" id="GO:0004828">
    <property type="term" value="F:serine-tRNA ligase activity"/>
    <property type="evidence" value="ECO:0007669"/>
    <property type="project" value="UniProtKB-UniRule"/>
</dbReference>
<dbReference type="GO" id="GO:0016260">
    <property type="term" value="P:selenocysteine biosynthetic process"/>
    <property type="evidence" value="ECO:0007669"/>
    <property type="project" value="UniProtKB-UniRule"/>
</dbReference>
<dbReference type="GO" id="GO:0006434">
    <property type="term" value="P:seryl-tRNA aminoacylation"/>
    <property type="evidence" value="ECO:0007669"/>
    <property type="project" value="UniProtKB-UniRule"/>
</dbReference>
<dbReference type="CDD" id="cd00770">
    <property type="entry name" value="SerRS_core"/>
    <property type="match status" value="1"/>
</dbReference>
<dbReference type="FunFam" id="3.30.930.10:FF:000048">
    <property type="entry name" value="Serine--tRNA ligase"/>
    <property type="match status" value="1"/>
</dbReference>
<dbReference type="Gene3D" id="3.30.930.10">
    <property type="entry name" value="Bira Bifunctional Protein, Domain 2"/>
    <property type="match status" value="1"/>
</dbReference>
<dbReference type="Gene3D" id="1.10.287.40">
    <property type="entry name" value="Serine-tRNA synthetase, tRNA binding domain"/>
    <property type="match status" value="1"/>
</dbReference>
<dbReference type="HAMAP" id="MF_00176">
    <property type="entry name" value="Ser_tRNA_synth_type1"/>
    <property type="match status" value="1"/>
</dbReference>
<dbReference type="InterPro" id="IPR002314">
    <property type="entry name" value="aa-tRNA-synt_IIb"/>
</dbReference>
<dbReference type="InterPro" id="IPR006195">
    <property type="entry name" value="aa-tRNA-synth_II"/>
</dbReference>
<dbReference type="InterPro" id="IPR045864">
    <property type="entry name" value="aa-tRNA-synth_II/BPL/LPL"/>
</dbReference>
<dbReference type="InterPro" id="IPR002317">
    <property type="entry name" value="Ser-tRNA-ligase_type_1"/>
</dbReference>
<dbReference type="InterPro" id="IPR015866">
    <property type="entry name" value="Ser-tRNA-synth_1_N"/>
</dbReference>
<dbReference type="InterPro" id="IPR042103">
    <property type="entry name" value="SerRS_1_N_sf"/>
</dbReference>
<dbReference type="InterPro" id="IPR033729">
    <property type="entry name" value="SerRS_core"/>
</dbReference>
<dbReference type="InterPro" id="IPR010978">
    <property type="entry name" value="tRNA-bd_arm"/>
</dbReference>
<dbReference type="NCBIfam" id="TIGR00414">
    <property type="entry name" value="serS"/>
    <property type="match status" value="1"/>
</dbReference>
<dbReference type="PANTHER" id="PTHR11778">
    <property type="entry name" value="SERYL-TRNA SYNTHETASE"/>
    <property type="match status" value="1"/>
</dbReference>
<dbReference type="Pfam" id="PF02403">
    <property type="entry name" value="Seryl_tRNA_N"/>
    <property type="match status" value="1"/>
</dbReference>
<dbReference type="Pfam" id="PF00587">
    <property type="entry name" value="tRNA-synt_2b"/>
    <property type="match status" value="1"/>
</dbReference>
<dbReference type="PIRSF" id="PIRSF001529">
    <property type="entry name" value="Ser-tRNA-synth_IIa"/>
    <property type="match status" value="1"/>
</dbReference>
<dbReference type="PRINTS" id="PR00981">
    <property type="entry name" value="TRNASYNTHSER"/>
</dbReference>
<dbReference type="SUPFAM" id="SSF55681">
    <property type="entry name" value="Class II aaRS and biotin synthetases"/>
    <property type="match status" value="1"/>
</dbReference>
<dbReference type="SUPFAM" id="SSF46589">
    <property type="entry name" value="tRNA-binding arm"/>
    <property type="match status" value="1"/>
</dbReference>
<dbReference type="PROSITE" id="PS50862">
    <property type="entry name" value="AA_TRNA_LIGASE_II"/>
    <property type="match status" value="1"/>
</dbReference>
<sequence length="453" mass="52455">MWSILKAVRENPEILYESQRRRGLSVDIVDRAIELDRKWREELKRVNQLRKRRNELARAVKEAKGEERAKVIEEAKAVSEEVKRAEEELKRLEAELEEVLLSIPNIIHESVPVGKDDSENVPIKYWGKAKVYFEDVDAFVEMTQGMAEYEVTDVKPIGHADAVEIFGWADLERAAKVAGARFYYLLNDLVWLDFALTMYALDFLRKEDFTIVSPPYMMRREAYSGVTAFSDFEEVIYKVEDEDLYLIATSEHPIAAMHMREVLEERELPLLYAGVSPCFRKEAGAHGKDTKGIFRVHQFNKVEQFVFCLPEQSWEWHEKLIENVEKLWQGLGIPYRIVNICTGDLGIVAAKKYDLEAWMPAQAKYREMVSCSNCTDWQSYRLDIRFAEERGKPSKGFVHTLNSTAIATTRAITAIIENFQLEDGRVEIPRVLRKYLEPIESAPKDFIMPAKSQ</sequence>
<evidence type="ECO:0000255" key="1">
    <source>
        <dbReference type="HAMAP-Rule" id="MF_00176"/>
    </source>
</evidence>